<protein>
    <recommendedName>
        <fullName evidence="1">S-adenosylmethionine:tRNA ribosyltransferase-isomerase</fullName>
        <ecNumber evidence="1">2.4.99.17</ecNumber>
    </recommendedName>
    <alternativeName>
        <fullName evidence="1">Queuosine biosynthesis protein QueA</fullName>
    </alternativeName>
</protein>
<comment type="function">
    <text evidence="1">Transfers and isomerizes the ribose moiety from AdoMet to the 7-aminomethyl group of 7-deazaguanine (preQ1-tRNA) to give epoxyqueuosine (oQ-tRNA).</text>
</comment>
<comment type="catalytic activity">
    <reaction evidence="1">
        <text>7-aminomethyl-7-carbaguanosine(34) in tRNA + S-adenosyl-L-methionine = epoxyqueuosine(34) in tRNA + adenine + L-methionine + 2 H(+)</text>
        <dbReference type="Rhea" id="RHEA:32155"/>
        <dbReference type="Rhea" id="RHEA-COMP:10342"/>
        <dbReference type="Rhea" id="RHEA-COMP:18582"/>
        <dbReference type="ChEBI" id="CHEBI:15378"/>
        <dbReference type="ChEBI" id="CHEBI:16708"/>
        <dbReference type="ChEBI" id="CHEBI:57844"/>
        <dbReference type="ChEBI" id="CHEBI:59789"/>
        <dbReference type="ChEBI" id="CHEBI:82833"/>
        <dbReference type="ChEBI" id="CHEBI:194443"/>
        <dbReference type="EC" id="2.4.99.17"/>
    </reaction>
</comment>
<comment type="pathway">
    <text evidence="1">tRNA modification; tRNA-queuosine biosynthesis.</text>
</comment>
<comment type="subunit">
    <text evidence="1">Monomer.</text>
</comment>
<comment type="subcellular location">
    <subcellularLocation>
        <location evidence="1">Cytoplasm</location>
    </subcellularLocation>
</comment>
<comment type="similarity">
    <text evidence="1">Belongs to the QueA family.</text>
</comment>
<feature type="chain" id="PRO_1000094742" description="S-adenosylmethionine:tRNA ribosyltransferase-isomerase">
    <location>
        <begin position="1"/>
        <end position="351"/>
    </location>
</feature>
<evidence type="ECO:0000255" key="1">
    <source>
        <dbReference type="HAMAP-Rule" id="MF_00113"/>
    </source>
</evidence>
<gene>
    <name evidence="1" type="primary">queA</name>
    <name type="ordered locus">ABSDF0521</name>
</gene>
<dbReference type="EC" id="2.4.99.17" evidence="1"/>
<dbReference type="EMBL" id="CU468230">
    <property type="protein sequence ID" value="CAO99905.1"/>
    <property type="molecule type" value="Genomic_DNA"/>
</dbReference>
<dbReference type="SMR" id="B0VRB1"/>
<dbReference type="KEGG" id="abm:ABSDF0521"/>
<dbReference type="HOGENOM" id="CLU_039110_1_0_6"/>
<dbReference type="UniPathway" id="UPA00392"/>
<dbReference type="Proteomes" id="UP000001741">
    <property type="component" value="Chromosome"/>
</dbReference>
<dbReference type="GO" id="GO:0005737">
    <property type="term" value="C:cytoplasm"/>
    <property type="evidence" value="ECO:0007669"/>
    <property type="project" value="UniProtKB-SubCell"/>
</dbReference>
<dbReference type="GO" id="GO:0051075">
    <property type="term" value="F:S-adenosylmethionine:tRNA ribosyltransferase-isomerase activity"/>
    <property type="evidence" value="ECO:0007669"/>
    <property type="project" value="UniProtKB-EC"/>
</dbReference>
<dbReference type="GO" id="GO:0008616">
    <property type="term" value="P:queuosine biosynthetic process"/>
    <property type="evidence" value="ECO:0007669"/>
    <property type="project" value="UniProtKB-UniRule"/>
</dbReference>
<dbReference type="GO" id="GO:0002099">
    <property type="term" value="P:tRNA wobble guanine modification"/>
    <property type="evidence" value="ECO:0007669"/>
    <property type="project" value="TreeGrafter"/>
</dbReference>
<dbReference type="FunFam" id="3.40.1780.10:FF:000001">
    <property type="entry name" value="S-adenosylmethionine:tRNA ribosyltransferase-isomerase"/>
    <property type="match status" value="1"/>
</dbReference>
<dbReference type="Gene3D" id="2.40.10.240">
    <property type="entry name" value="QueA-like"/>
    <property type="match status" value="1"/>
</dbReference>
<dbReference type="Gene3D" id="3.40.1780.10">
    <property type="entry name" value="QueA-like"/>
    <property type="match status" value="1"/>
</dbReference>
<dbReference type="HAMAP" id="MF_00113">
    <property type="entry name" value="QueA"/>
    <property type="match status" value="1"/>
</dbReference>
<dbReference type="InterPro" id="IPR003699">
    <property type="entry name" value="QueA"/>
</dbReference>
<dbReference type="InterPro" id="IPR042118">
    <property type="entry name" value="QueA_dom1"/>
</dbReference>
<dbReference type="InterPro" id="IPR042119">
    <property type="entry name" value="QueA_dom2"/>
</dbReference>
<dbReference type="InterPro" id="IPR036100">
    <property type="entry name" value="QueA_sf"/>
</dbReference>
<dbReference type="NCBIfam" id="NF001140">
    <property type="entry name" value="PRK00147.1"/>
    <property type="match status" value="1"/>
</dbReference>
<dbReference type="NCBIfam" id="TIGR00113">
    <property type="entry name" value="queA"/>
    <property type="match status" value="1"/>
</dbReference>
<dbReference type="PANTHER" id="PTHR30307">
    <property type="entry name" value="S-ADENOSYLMETHIONINE:TRNA RIBOSYLTRANSFERASE-ISOMERASE"/>
    <property type="match status" value="1"/>
</dbReference>
<dbReference type="PANTHER" id="PTHR30307:SF0">
    <property type="entry name" value="S-ADENOSYLMETHIONINE:TRNA RIBOSYLTRANSFERASE-ISOMERASE"/>
    <property type="match status" value="1"/>
</dbReference>
<dbReference type="Pfam" id="PF02547">
    <property type="entry name" value="Queuosine_synth"/>
    <property type="match status" value="1"/>
</dbReference>
<dbReference type="SUPFAM" id="SSF111337">
    <property type="entry name" value="QueA-like"/>
    <property type="match status" value="1"/>
</dbReference>
<proteinExistence type="inferred from homology"/>
<accession>B0VRB1</accession>
<name>QUEA_ACIBS</name>
<reference key="1">
    <citation type="journal article" date="2008" name="PLoS ONE">
        <title>Comparative analysis of Acinetobacters: three genomes for three lifestyles.</title>
        <authorList>
            <person name="Vallenet D."/>
            <person name="Nordmann P."/>
            <person name="Barbe V."/>
            <person name="Poirel L."/>
            <person name="Mangenot S."/>
            <person name="Bataille E."/>
            <person name="Dossat C."/>
            <person name="Gas S."/>
            <person name="Kreimeyer A."/>
            <person name="Lenoble P."/>
            <person name="Oztas S."/>
            <person name="Poulain J."/>
            <person name="Segurens B."/>
            <person name="Robert C."/>
            <person name="Abergel C."/>
            <person name="Claverie J.-M."/>
            <person name="Raoult D."/>
            <person name="Medigue C."/>
            <person name="Weissenbach J."/>
            <person name="Cruveiller S."/>
        </authorList>
    </citation>
    <scope>NUCLEOTIDE SEQUENCE [LARGE SCALE GENOMIC DNA]</scope>
    <source>
        <strain>SDF</strain>
    </source>
</reference>
<organism>
    <name type="scientific">Acinetobacter baumannii (strain SDF)</name>
    <dbReference type="NCBI Taxonomy" id="509170"/>
    <lineage>
        <taxon>Bacteria</taxon>
        <taxon>Pseudomonadati</taxon>
        <taxon>Pseudomonadota</taxon>
        <taxon>Gammaproteobacteria</taxon>
        <taxon>Moraxellales</taxon>
        <taxon>Moraxellaceae</taxon>
        <taxon>Acinetobacter</taxon>
        <taxon>Acinetobacter calcoaceticus/baumannii complex</taxon>
    </lineage>
</organism>
<keyword id="KW-0963">Cytoplasm</keyword>
<keyword id="KW-0671">Queuosine biosynthesis</keyword>
<keyword id="KW-0949">S-adenosyl-L-methionine</keyword>
<keyword id="KW-0808">Transferase</keyword>
<sequence length="351" mass="39347">MQLSDFSFELPDELIARYPLETRSASRLLHLDAKGQYHDHMFTDIIDLFEEGDLLVLNDTKVMKARLKGKRTTGGAIEILVERMPNHTTAYCHIKASNSPKAGAELFVGADNIPVIVRGRHENLFVVEFSQPILPVLEQYGQLPIPPYFNREAEEIDTERYQTVFHNPEKIASVAAPTASLHFDEELLAKLDQKGVKKTFVTLHVGAGTFMPVRTDDITNHVMHSEWCDVPQETIDLILATKARGNKVIAVGTTATRALESAAQAHGGKIAAWTGDTQIFIYPGYEFCIVDRLITNFHLPESTLLMLVSALSNRENILAAYEHAVKDRYHFFSYGDAMLIDKLEVLKLKLG</sequence>